<protein>
    <recommendedName>
        <fullName>Probable cGMP 3',5'-cyclic phosphodiesterase subunit delta</fullName>
    </recommendedName>
</protein>
<sequence length="151" mass="17504">MGTDDVARSEKIREGFQINWLILRDADTGKIIWQENKDFSCPDVEHEARVPIKILDLRAVSREINFSTVESMENFRLDQKVLFKGRIMEEWFFEMGWVSPNTTNTWQSTIEAAPESQMMPAKVLNGNVTIETSFFDGETLISKSVVRLYYT</sequence>
<name>PDE6D_AEDAE</name>
<proteinExistence type="inferred from homology"/>
<evidence type="ECO:0000250" key="1">
    <source>
        <dbReference type="UniProtKB" id="Q9VLJ0"/>
    </source>
</evidence>
<evidence type="ECO:0000255" key="2"/>
<evidence type="ECO:0000312" key="3">
    <source>
        <dbReference type="EMBL" id="EAT45289.1"/>
    </source>
</evidence>
<gene>
    <name evidence="1" type="primary">PrBP</name>
    <name type="ORF">AAEL003437</name>
</gene>
<keyword id="KW-0140">cGMP</keyword>
<keyword id="KW-0963">Cytoplasm</keyword>
<keyword id="KW-0539">Nucleus</keyword>
<keyword id="KW-1185">Reference proteome</keyword>
<accession>Q17FF6</accession>
<dbReference type="EMBL" id="CH477271">
    <property type="protein sequence ID" value="EAT45289.1"/>
    <property type="molecule type" value="Genomic_DNA"/>
</dbReference>
<dbReference type="RefSeq" id="XP_001656796.1">
    <property type="nucleotide sequence ID" value="XM_001656746.1"/>
</dbReference>
<dbReference type="SMR" id="Q17FF6"/>
<dbReference type="FunCoup" id="Q17FF6">
    <property type="interactions" value="1460"/>
</dbReference>
<dbReference type="STRING" id="7159.Q17FF6"/>
<dbReference type="PaxDb" id="7159-AAEL003437-PA"/>
<dbReference type="GeneID" id="5578100"/>
<dbReference type="KEGG" id="aag:5578100"/>
<dbReference type="VEuPathDB" id="VectorBase:AAEL003437"/>
<dbReference type="eggNOG" id="KOG4038">
    <property type="taxonomic scope" value="Eukaryota"/>
</dbReference>
<dbReference type="HOGENOM" id="CLU_119682_0_0_1"/>
<dbReference type="InParanoid" id="Q17FF6"/>
<dbReference type="OMA" id="STNTWQN"/>
<dbReference type="OrthoDB" id="10248777at2759"/>
<dbReference type="PhylomeDB" id="Q17FF6"/>
<dbReference type="Proteomes" id="UP000008820">
    <property type="component" value="Chromosome 3"/>
</dbReference>
<dbReference type="Proteomes" id="UP000682892">
    <property type="component" value="Chromosome 3"/>
</dbReference>
<dbReference type="GO" id="GO:0005737">
    <property type="term" value="C:cytoplasm"/>
    <property type="evidence" value="ECO:0000250"/>
    <property type="project" value="UniProtKB"/>
</dbReference>
<dbReference type="GO" id="GO:0005634">
    <property type="term" value="C:nucleus"/>
    <property type="evidence" value="ECO:0000250"/>
    <property type="project" value="UniProtKB"/>
</dbReference>
<dbReference type="GO" id="GO:0050953">
    <property type="term" value="P:sensory perception of light stimulus"/>
    <property type="evidence" value="ECO:0007669"/>
    <property type="project" value="InterPro"/>
</dbReference>
<dbReference type="FunFam" id="2.70.50.40:FF:000002">
    <property type="entry name" value="Retinal rod rhodopsin-sensitive cGMP 3',5'-cyclic phosphodiesterase subunit delta"/>
    <property type="match status" value="1"/>
</dbReference>
<dbReference type="Gene3D" id="2.70.50.40">
    <property type="entry name" value="GMP phosphodiesterase, delta subunit"/>
    <property type="match status" value="1"/>
</dbReference>
<dbReference type="InterPro" id="IPR014756">
    <property type="entry name" value="Ig_E-set"/>
</dbReference>
<dbReference type="InterPro" id="IPR008015">
    <property type="entry name" value="PDED_dom"/>
</dbReference>
<dbReference type="InterPro" id="IPR037036">
    <property type="entry name" value="PDED_dom_sf"/>
</dbReference>
<dbReference type="InterPro" id="IPR017287">
    <property type="entry name" value="Rhodop-sen_GMP-Pdiesterase_dsu"/>
</dbReference>
<dbReference type="PANTHER" id="PTHR12976">
    <property type="entry name" value="RETINAL ROD RHODOPSIN-SENSITIVE CGMP 3',5'-CYCLIC PHOSPHODIESTERASE DELTA-SUBUNIT"/>
    <property type="match status" value="1"/>
</dbReference>
<dbReference type="PANTHER" id="PTHR12976:SF0">
    <property type="entry name" value="RETINAL ROD RHODOPSIN-SENSITIVE CGMP 3',5'-CYCLIC PHOSPHODIESTERASE SUBUNIT DELTA"/>
    <property type="match status" value="1"/>
</dbReference>
<dbReference type="Pfam" id="PF05351">
    <property type="entry name" value="GMP_PDE_delta"/>
    <property type="match status" value="1"/>
</dbReference>
<dbReference type="PIRSF" id="PIRSF037825">
    <property type="entry name" value="GMP-Pdiesterase_delta"/>
    <property type="match status" value="1"/>
</dbReference>
<dbReference type="SUPFAM" id="SSF81296">
    <property type="entry name" value="E set domains"/>
    <property type="match status" value="1"/>
</dbReference>
<feature type="chain" id="PRO_0000363670" description="Probable cGMP 3',5'-cyclic phosphodiesterase subunit delta">
    <location>
        <begin position="1"/>
        <end position="151"/>
    </location>
</feature>
<comment type="subunit">
    <text evidence="1">Interacts with Pde6.</text>
</comment>
<comment type="subcellular location">
    <subcellularLocation>
        <location evidence="1">Nucleus</location>
    </subcellularLocation>
    <subcellularLocation>
        <location evidence="1">Cytoplasm</location>
    </subcellularLocation>
</comment>
<comment type="similarity">
    <text evidence="2">Belongs to the PDE6D/unc-119 family.</text>
</comment>
<organism>
    <name type="scientific">Aedes aegypti</name>
    <name type="common">Yellowfever mosquito</name>
    <name type="synonym">Culex aegypti</name>
    <dbReference type="NCBI Taxonomy" id="7159"/>
    <lineage>
        <taxon>Eukaryota</taxon>
        <taxon>Metazoa</taxon>
        <taxon>Ecdysozoa</taxon>
        <taxon>Arthropoda</taxon>
        <taxon>Hexapoda</taxon>
        <taxon>Insecta</taxon>
        <taxon>Pterygota</taxon>
        <taxon>Neoptera</taxon>
        <taxon>Endopterygota</taxon>
        <taxon>Diptera</taxon>
        <taxon>Nematocera</taxon>
        <taxon>Culicoidea</taxon>
        <taxon>Culicidae</taxon>
        <taxon>Culicinae</taxon>
        <taxon>Aedini</taxon>
        <taxon>Aedes</taxon>
        <taxon>Stegomyia</taxon>
    </lineage>
</organism>
<reference evidence="3" key="1">
    <citation type="journal article" date="2007" name="Science">
        <title>Genome sequence of Aedes aegypti, a major arbovirus vector.</title>
        <authorList>
            <person name="Nene V."/>
            <person name="Wortman J.R."/>
            <person name="Lawson D."/>
            <person name="Haas B.J."/>
            <person name="Kodira C.D."/>
            <person name="Tu Z.J."/>
            <person name="Loftus B.J."/>
            <person name="Xi Z."/>
            <person name="Megy K."/>
            <person name="Grabherr M."/>
            <person name="Ren Q."/>
            <person name="Zdobnov E.M."/>
            <person name="Lobo N.F."/>
            <person name="Campbell K.S."/>
            <person name="Brown S.E."/>
            <person name="Bonaldo M.F."/>
            <person name="Zhu J."/>
            <person name="Sinkins S.P."/>
            <person name="Hogenkamp D.G."/>
            <person name="Amedeo P."/>
            <person name="Arensburger P."/>
            <person name="Atkinson P.W."/>
            <person name="Bidwell S.L."/>
            <person name="Biedler J."/>
            <person name="Birney E."/>
            <person name="Bruggner R.V."/>
            <person name="Costas J."/>
            <person name="Coy M.R."/>
            <person name="Crabtree J."/>
            <person name="Crawford M."/>
            <person name="DeBruyn B."/>
            <person name="DeCaprio D."/>
            <person name="Eiglmeier K."/>
            <person name="Eisenstadt E."/>
            <person name="El-Dorry H."/>
            <person name="Gelbart W.M."/>
            <person name="Gomes S.L."/>
            <person name="Hammond M."/>
            <person name="Hannick L.I."/>
            <person name="Hogan J.R."/>
            <person name="Holmes M.H."/>
            <person name="Jaffe D."/>
            <person name="Johnston S.J."/>
            <person name="Kennedy R.C."/>
            <person name="Koo H."/>
            <person name="Kravitz S."/>
            <person name="Kriventseva E.V."/>
            <person name="Kulp D."/>
            <person name="Labutti K."/>
            <person name="Lee E."/>
            <person name="Li S."/>
            <person name="Lovin D.D."/>
            <person name="Mao C."/>
            <person name="Mauceli E."/>
            <person name="Menck C.F."/>
            <person name="Miller J.R."/>
            <person name="Montgomery P."/>
            <person name="Mori A."/>
            <person name="Nascimento A.L."/>
            <person name="Naveira H.F."/>
            <person name="Nusbaum C."/>
            <person name="O'Leary S.B."/>
            <person name="Orvis J."/>
            <person name="Pertea M."/>
            <person name="Quesneville H."/>
            <person name="Reidenbach K.R."/>
            <person name="Rogers Y.-H.C."/>
            <person name="Roth C.W."/>
            <person name="Schneider J.R."/>
            <person name="Schatz M."/>
            <person name="Shumway M."/>
            <person name="Stanke M."/>
            <person name="Stinson E.O."/>
            <person name="Tubio J.M.C."/>
            <person name="Vanzee J.P."/>
            <person name="Verjovski-Almeida S."/>
            <person name="Werner D."/>
            <person name="White O.R."/>
            <person name="Wyder S."/>
            <person name="Zeng Q."/>
            <person name="Zhao Q."/>
            <person name="Zhao Y."/>
            <person name="Hill C.A."/>
            <person name="Raikhel A.S."/>
            <person name="Soares M.B."/>
            <person name="Knudson D.L."/>
            <person name="Lee N.H."/>
            <person name="Galagan J."/>
            <person name="Salzberg S.L."/>
            <person name="Paulsen I.T."/>
            <person name="Dimopoulos G."/>
            <person name="Collins F.H."/>
            <person name="Bruce B."/>
            <person name="Fraser-Liggett C.M."/>
            <person name="Severson D.W."/>
        </authorList>
    </citation>
    <scope>NUCLEOTIDE SEQUENCE [LARGE SCALE GENOMIC DNA]</scope>
    <source>
        <strain>LVPib12</strain>
    </source>
</reference>